<protein>
    <recommendedName>
        <fullName evidence="1">Probable tRNA sulfurtransferase</fullName>
        <ecNumber evidence="1">2.8.1.4</ecNumber>
    </recommendedName>
    <alternativeName>
        <fullName evidence="1">Sulfur carrier protein ThiS sulfurtransferase</fullName>
    </alternativeName>
    <alternativeName>
        <fullName evidence="1">Thiamine biosynthesis protein ThiI</fullName>
    </alternativeName>
    <alternativeName>
        <fullName evidence="1">tRNA 4-thiouridine synthase</fullName>
    </alternativeName>
</protein>
<dbReference type="EC" id="2.8.1.4" evidence="1"/>
<dbReference type="EMBL" id="CP001175">
    <property type="protein sequence ID" value="ACK39318.1"/>
    <property type="molecule type" value="Genomic_DNA"/>
</dbReference>
<dbReference type="RefSeq" id="WP_003730662.1">
    <property type="nucleotide sequence ID" value="NC_011660.1"/>
</dbReference>
<dbReference type="SMR" id="B8DHE9"/>
<dbReference type="KEGG" id="lmh:LMHCC_0970"/>
<dbReference type="HOGENOM" id="CLU_037952_4_0_9"/>
<dbReference type="UniPathway" id="UPA00060"/>
<dbReference type="GO" id="GO:0005829">
    <property type="term" value="C:cytosol"/>
    <property type="evidence" value="ECO:0007669"/>
    <property type="project" value="TreeGrafter"/>
</dbReference>
<dbReference type="GO" id="GO:0005524">
    <property type="term" value="F:ATP binding"/>
    <property type="evidence" value="ECO:0007669"/>
    <property type="project" value="UniProtKB-UniRule"/>
</dbReference>
<dbReference type="GO" id="GO:0004810">
    <property type="term" value="F:CCA tRNA nucleotidyltransferase activity"/>
    <property type="evidence" value="ECO:0007669"/>
    <property type="project" value="InterPro"/>
</dbReference>
<dbReference type="GO" id="GO:0000049">
    <property type="term" value="F:tRNA binding"/>
    <property type="evidence" value="ECO:0007669"/>
    <property type="project" value="UniProtKB-UniRule"/>
</dbReference>
<dbReference type="GO" id="GO:0140741">
    <property type="term" value="F:tRNA-uracil-4 sulfurtransferase activity"/>
    <property type="evidence" value="ECO:0007669"/>
    <property type="project" value="UniProtKB-EC"/>
</dbReference>
<dbReference type="GO" id="GO:0009228">
    <property type="term" value="P:thiamine biosynthetic process"/>
    <property type="evidence" value="ECO:0007669"/>
    <property type="project" value="UniProtKB-KW"/>
</dbReference>
<dbReference type="GO" id="GO:0009229">
    <property type="term" value="P:thiamine diphosphate biosynthetic process"/>
    <property type="evidence" value="ECO:0007669"/>
    <property type="project" value="UniProtKB-UniRule"/>
</dbReference>
<dbReference type="GO" id="GO:0052837">
    <property type="term" value="P:thiazole biosynthetic process"/>
    <property type="evidence" value="ECO:0007669"/>
    <property type="project" value="TreeGrafter"/>
</dbReference>
<dbReference type="GO" id="GO:0002937">
    <property type="term" value="P:tRNA 4-thiouridine biosynthesis"/>
    <property type="evidence" value="ECO:0007669"/>
    <property type="project" value="TreeGrafter"/>
</dbReference>
<dbReference type="CDD" id="cd01712">
    <property type="entry name" value="PPase_ThiI"/>
    <property type="match status" value="1"/>
</dbReference>
<dbReference type="CDD" id="cd11716">
    <property type="entry name" value="THUMP_ThiI"/>
    <property type="match status" value="1"/>
</dbReference>
<dbReference type="FunFam" id="3.30.2130.30:FF:000011">
    <property type="entry name" value="Probable tRNA sulfurtransferase"/>
    <property type="match status" value="1"/>
</dbReference>
<dbReference type="FunFam" id="3.40.50.620:FF:000053">
    <property type="entry name" value="Probable tRNA sulfurtransferase"/>
    <property type="match status" value="1"/>
</dbReference>
<dbReference type="Gene3D" id="3.30.2130.30">
    <property type="match status" value="1"/>
</dbReference>
<dbReference type="Gene3D" id="3.40.50.620">
    <property type="entry name" value="HUPs"/>
    <property type="match status" value="1"/>
</dbReference>
<dbReference type="HAMAP" id="MF_00021">
    <property type="entry name" value="ThiI"/>
    <property type="match status" value="1"/>
</dbReference>
<dbReference type="InterPro" id="IPR014729">
    <property type="entry name" value="Rossmann-like_a/b/a_fold"/>
</dbReference>
<dbReference type="InterPro" id="IPR020536">
    <property type="entry name" value="ThiI_AANH"/>
</dbReference>
<dbReference type="InterPro" id="IPR054173">
    <property type="entry name" value="ThiI_fer"/>
</dbReference>
<dbReference type="InterPro" id="IPR049961">
    <property type="entry name" value="ThiI_N"/>
</dbReference>
<dbReference type="InterPro" id="IPR004114">
    <property type="entry name" value="THUMP_dom"/>
</dbReference>
<dbReference type="InterPro" id="IPR049962">
    <property type="entry name" value="THUMP_ThiI"/>
</dbReference>
<dbReference type="InterPro" id="IPR003720">
    <property type="entry name" value="tRNA_STrfase"/>
</dbReference>
<dbReference type="InterPro" id="IPR050102">
    <property type="entry name" value="tRNA_sulfurtransferase_ThiI"/>
</dbReference>
<dbReference type="NCBIfam" id="TIGR00342">
    <property type="entry name" value="tRNA uracil 4-sulfurtransferase ThiI"/>
    <property type="match status" value="1"/>
</dbReference>
<dbReference type="PANTHER" id="PTHR43209">
    <property type="entry name" value="TRNA SULFURTRANSFERASE"/>
    <property type="match status" value="1"/>
</dbReference>
<dbReference type="PANTHER" id="PTHR43209:SF1">
    <property type="entry name" value="TRNA SULFURTRANSFERASE"/>
    <property type="match status" value="1"/>
</dbReference>
<dbReference type="Pfam" id="PF02568">
    <property type="entry name" value="ThiI"/>
    <property type="match status" value="1"/>
</dbReference>
<dbReference type="Pfam" id="PF22025">
    <property type="entry name" value="ThiI_fer"/>
    <property type="match status" value="1"/>
</dbReference>
<dbReference type="Pfam" id="PF02926">
    <property type="entry name" value="THUMP"/>
    <property type="match status" value="1"/>
</dbReference>
<dbReference type="SMART" id="SM00981">
    <property type="entry name" value="THUMP"/>
    <property type="match status" value="1"/>
</dbReference>
<dbReference type="SUPFAM" id="SSF52402">
    <property type="entry name" value="Adenine nucleotide alpha hydrolases-like"/>
    <property type="match status" value="1"/>
</dbReference>
<dbReference type="SUPFAM" id="SSF143437">
    <property type="entry name" value="THUMP domain-like"/>
    <property type="match status" value="1"/>
</dbReference>
<dbReference type="PROSITE" id="PS51165">
    <property type="entry name" value="THUMP"/>
    <property type="match status" value="1"/>
</dbReference>
<organism>
    <name type="scientific">Listeria monocytogenes serotype 4a (strain HCC23)</name>
    <dbReference type="NCBI Taxonomy" id="552536"/>
    <lineage>
        <taxon>Bacteria</taxon>
        <taxon>Bacillati</taxon>
        <taxon>Bacillota</taxon>
        <taxon>Bacilli</taxon>
        <taxon>Bacillales</taxon>
        <taxon>Listeriaceae</taxon>
        <taxon>Listeria</taxon>
    </lineage>
</organism>
<feature type="chain" id="PRO_1000196928" description="Probable tRNA sulfurtransferase">
    <location>
        <begin position="1"/>
        <end position="403"/>
    </location>
</feature>
<feature type="domain" description="THUMP" evidence="1">
    <location>
        <begin position="60"/>
        <end position="165"/>
    </location>
</feature>
<feature type="binding site" evidence="1">
    <location>
        <begin position="183"/>
        <end position="184"/>
    </location>
    <ligand>
        <name>ATP</name>
        <dbReference type="ChEBI" id="CHEBI:30616"/>
    </ligand>
</feature>
<feature type="binding site" evidence="1">
    <location>
        <begin position="208"/>
        <end position="209"/>
    </location>
    <ligand>
        <name>ATP</name>
        <dbReference type="ChEBI" id="CHEBI:30616"/>
    </ligand>
</feature>
<feature type="binding site" evidence="1">
    <location>
        <position position="265"/>
    </location>
    <ligand>
        <name>ATP</name>
        <dbReference type="ChEBI" id="CHEBI:30616"/>
    </ligand>
</feature>
<feature type="binding site" evidence="1">
    <location>
        <position position="287"/>
    </location>
    <ligand>
        <name>ATP</name>
        <dbReference type="ChEBI" id="CHEBI:30616"/>
    </ligand>
</feature>
<feature type="binding site" evidence="1">
    <location>
        <position position="296"/>
    </location>
    <ligand>
        <name>ATP</name>
        <dbReference type="ChEBI" id="CHEBI:30616"/>
    </ligand>
</feature>
<reference key="1">
    <citation type="journal article" date="2011" name="J. Bacteriol.">
        <title>Genome sequence of lineage III Listeria monocytogenes strain HCC23.</title>
        <authorList>
            <person name="Steele C.L."/>
            <person name="Donaldson J.R."/>
            <person name="Paul D."/>
            <person name="Banes M.M."/>
            <person name="Arick T."/>
            <person name="Bridges S.M."/>
            <person name="Lawrence M.L."/>
        </authorList>
    </citation>
    <scope>NUCLEOTIDE SEQUENCE [LARGE SCALE GENOMIC DNA]</scope>
    <source>
        <strain>HCC23</strain>
    </source>
</reference>
<accession>B8DHE9</accession>
<comment type="function">
    <text evidence="1">Catalyzes the ATP-dependent transfer of a sulfur to tRNA to produce 4-thiouridine in position 8 of tRNAs, which functions as a near-UV photosensor. Also catalyzes the transfer of sulfur to the sulfur carrier protein ThiS, forming ThiS-thiocarboxylate. This is a step in the synthesis of thiazole, in the thiamine biosynthesis pathway. The sulfur is donated as persulfide by IscS.</text>
</comment>
<comment type="catalytic activity">
    <reaction evidence="1">
        <text>[ThiI sulfur-carrier protein]-S-sulfanyl-L-cysteine + a uridine in tRNA + 2 reduced [2Fe-2S]-[ferredoxin] + ATP + H(+) = [ThiI sulfur-carrier protein]-L-cysteine + a 4-thiouridine in tRNA + 2 oxidized [2Fe-2S]-[ferredoxin] + AMP + diphosphate</text>
        <dbReference type="Rhea" id="RHEA:24176"/>
        <dbReference type="Rhea" id="RHEA-COMP:10000"/>
        <dbReference type="Rhea" id="RHEA-COMP:10001"/>
        <dbReference type="Rhea" id="RHEA-COMP:13337"/>
        <dbReference type="Rhea" id="RHEA-COMP:13338"/>
        <dbReference type="Rhea" id="RHEA-COMP:13339"/>
        <dbReference type="Rhea" id="RHEA-COMP:13340"/>
        <dbReference type="ChEBI" id="CHEBI:15378"/>
        <dbReference type="ChEBI" id="CHEBI:29950"/>
        <dbReference type="ChEBI" id="CHEBI:30616"/>
        <dbReference type="ChEBI" id="CHEBI:33019"/>
        <dbReference type="ChEBI" id="CHEBI:33737"/>
        <dbReference type="ChEBI" id="CHEBI:33738"/>
        <dbReference type="ChEBI" id="CHEBI:61963"/>
        <dbReference type="ChEBI" id="CHEBI:65315"/>
        <dbReference type="ChEBI" id="CHEBI:136798"/>
        <dbReference type="ChEBI" id="CHEBI:456215"/>
        <dbReference type="EC" id="2.8.1.4"/>
    </reaction>
</comment>
<comment type="catalytic activity">
    <reaction evidence="1">
        <text>[ThiS sulfur-carrier protein]-C-terminal Gly-Gly-AMP + S-sulfanyl-L-cysteinyl-[cysteine desulfurase] + AH2 = [ThiS sulfur-carrier protein]-C-terminal-Gly-aminoethanethioate + L-cysteinyl-[cysteine desulfurase] + A + AMP + 2 H(+)</text>
        <dbReference type="Rhea" id="RHEA:43340"/>
        <dbReference type="Rhea" id="RHEA-COMP:12157"/>
        <dbReference type="Rhea" id="RHEA-COMP:12158"/>
        <dbReference type="Rhea" id="RHEA-COMP:12910"/>
        <dbReference type="Rhea" id="RHEA-COMP:19908"/>
        <dbReference type="ChEBI" id="CHEBI:13193"/>
        <dbReference type="ChEBI" id="CHEBI:15378"/>
        <dbReference type="ChEBI" id="CHEBI:17499"/>
        <dbReference type="ChEBI" id="CHEBI:29950"/>
        <dbReference type="ChEBI" id="CHEBI:61963"/>
        <dbReference type="ChEBI" id="CHEBI:90618"/>
        <dbReference type="ChEBI" id="CHEBI:232372"/>
        <dbReference type="ChEBI" id="CHEBI:456215"/>
    </reaction>
</comment>
<comment type="pathway">
    <text evidence="1">Cofactor biosynthesis; thiamine diphosphate biosynthesis.</text>
</comment>
<comment type="subcellular location">
    <subcellularLocation>
        <location evidence="1">Cytoplasm</location>
    </subcellularLocation>
</comment>
<comment type="similarity">
    <text evidence="1">Belongs to the ThiI family.</text>
</comment>
<keyword id="KW-0067">ATP-binding</keyword>
<keyword id="KW-0963">Cytoplasm</keyword>
<keyword id="KW-0547">Nucleotide-binding</keyword>
<keyword id="KW-0694">RNA-binding</keyword>
<keyword id="KW-0784">Thiamine biosynthesis</keyword>
<keyword id="KW-0808">Transferase</keyword>
<keyword id="KW-0820">tRNA-binding</keyword>
<name>THII_LISMH</name>
<sequence>MEFDRMLIRYGELSTKGKNRKQFVTKLAQNVKRAMTDLPEVRIHGERDRMYIILNGADYQLAEERLKPIFGIQSFSPAVRVNLDLEEVKAAALALVQDAHEENGTFKVAARRSHREFPLDSNEINQEIGAHVLQNIEDLTVNVKNPDVKLTIDVRKEGVFLSCRTILGAAGLPVGSSGRAMLMLSGGIDSPVAGYLAQKRGVEIEAVHFHSPPYTSEQAKQKAIDLAAKLAKYSGQVQMHIVPFTEIQEVIKQQIPESVIMTVTRRMMLRITDELRRKRNGLAIVNGESLGQVASQTLESMLAINAVTATPIIRPVVSMDKNEIIQIAQKIDTYNLSVQPFEDCCTIFTPPSPKTKPKLDKIEHYESFTDFDALIAKALDNIETISVNVAETVQVKDEFADLF</sequence>
<proteinExistence type="inferred from homology"/>
<gene>
    <name evidence="1" type="primary">thiI</name>
    <name type="ordered locus">LMHCC_0970</name>
</gene>
<evidence type="ECO:0000255" key="1">
    <source>
        <dbReference type="HAMAP-Rule" id="MF_00021"/>
    </source>
</evidence>